<gene>
    <name evidence="3" type="primary">PFK5</name>
    <name type="ordered locus">At2g22480</name>
    <name type="ORF">F14M13.12</name>
</gene>
<organism>
    <name type="scientific">Arabidopsis thaliana</name>
    <name type="common">Mouse-ear cress</name>
    <dbReference type="NCBI Taxonomy" id="3702"/>
    <lineage>
        <taxon>Eukaryota</taxon>
        <taxon>Viridiplantae</taxon>
        <taxon>Streptophyta</taxon>
        <taxon>Embryophyta</taxon>
        <taxon>Tracheophyta</taxon>
        <taxon>Spermatophyta</taxon>
        <taxon>Magnoliopsida</taxon>
        <taxon>eudicotyledons</taxon>
        <taxon>Gunneridae</taxon>
        <taxon>Pentapetalae</taxon>
        <taxon>rosids</taxon>
        <taxon>malvids</taxon>
        <taxon>Brassicales</taxon>
        <taxon>Brassicaceae</taxon>
        <taxon>Camelineae</taxon>
        <taxon>Arabidopsis</taxon>
    </lineage>
</organism>
<name>PFKA5_ARATH</name>
<proteinExistence type="evidence at protein level"/>
<feature type="transit peptide" description="Chloroplast" evidence="2">
    <location>
        <begin position="1"/>
        <end position="52"/>
    </location>
</feature>
<feature type="chain" id="PRO_0000330772" description="ATP-dependent 6-phosphofructokinase 5, chloroplastic">
    <location>
        <begin position="53"/>
        <end position="537"/>
    </location>
</feature>
<feature type="region of interest" description="Disordered" evidence="4">
    <location>
        <begin position="35"/>
        <end position="64"/>
    </location>
</feature>
<feature type="compositionally biased region" description="Low complexity" evidence="4">
    <location>
        <begin position="39"/>
        <end position="54"/>
    </location>
</feature>
<feature type="active site" description="Proton acceptor" evidence="3">
    <location>
        <position position="309"/>
    </location>
</feature>
<feature type="binding site" evidence="3">
    <location>
        <position position="189"/>
    </location>
    <ligand>
        <name>ATP</name>
        <dbReference type="ChEBI" id="CHEBI:30616"/>
    </ligand>
</feature>
<feature type="binding site" evidence="3">
    <location>
        <begin position="253"/>
        <end position="254"/>
    </location>
    <ligand>
        <name>ATP</name>
        <dbReference type="ChEBI" id="CHEBI:30616"/>
    </ligand>
</feature>
<feature type="binding site" evidence="3">
    <location>
        <begin position="278"/>
        <end position="281"/>
    </location>
    <ligand>
        <name>ATP</name>
        <dbReference type="ChEBI" id="CHEBI:30616"/>
    </ligand>
</feature>
<feature type="binding site" evidence="3">
    <location>
        <position position="279"/>
    </location>
    <ligand>
        <name>Mg(2+)</name>
        <dbReference type="ChEBI" id="CHEBI:18420"/>
        <note>catalytic</note>
    </ligand>
</feature>
<feature type="binding site" evidence="3">
    <location>
        <begin position="307"/>
        <end position="309"/>
    </location>
    <ligand>
        <name>substrate</name>
    </ligand>
</feature>
<feature type="binding site" evidence="3">
    <location>
        <begin position="352"/>
        <end position="354"/>
    </location>
    <ligand>
        <name>substrate</name>
    </ligand>
</feature>
<feature type="binding site" evidence="3">
    <location>
        <position position="408"/>
    </location>
    <ligand>
        <name>substrate</name>
    </ligand>
</feature>
<feature type="binding site" evidence="3">
    <location>
        <begin position="460"/>
        <end position="463"/>
    </location>
    <ligand>
        <name>substrate</name>
    </ligand>
</feature>
<feature type="site" description="Important for substrate specificity; cannot use PPi as phosphoryl donor" evidence="3">
    <location>
        <position position="280"/>
    </location>
</feature>
<feature type="modified residue" description="Phosphoserine" evidence="1">
    <location>
        <position position="147"/>
    </location>
</feature>
<comment type="function">
    <text evidence="3">Catalyzes the phosphorylation of D-fructose 6-phosphate to fructose 1,6-bisphosphate by ATP, the first committing step of glycolysis.</text>
</comment>
<comment type="catalytic activity">
    <reaction evidence="3 5">
        <text>beta-D-fructose 6-phosphate + ATP = beta-D-fructose 1,6-bisphosphate + ADP + H(+)</text>
        <dbReference type="Rhea" id="RHEA:16109"/>
        <dbReference type="ChEBI" id="CHEBI:15378"/>
        <dbReference type="ChEBI" id="CHEBI:30616"/>
        <dbReference type="ChEBI" id="CHEBI:32966"/>
        <dbReference type="ChEBI" id="CHEBI:57634"/>
        <dbReference type="ChEBI" id="CHEBI:456216"/>
        <dbReference type="EC" id="2.7.1.11"/>
    </reaction>
</comment>
<comment type="cofactor">
    <cofactor evidence="3">
        <name>Mg(2+)</name>
        <dbReference type="ChEBI" id="CHEBI:18420"/>
    </cofactor>
</comment>
<comment type="activity regulation">
    <text evidence="3">Allosterically activated by AMP.</text>
</comment>
<comment type="pathway">
    <text evidence="3">Carbohydrate degradation; glycolysis; D-glyceraldehyde 3-phosphate and glycerone phosphate from D-glucose: step 3/4.</text>
</comment>
<comment type="subunit">
    <text evidence="3">Homotetramer.</text>
</comment>
<comment type="subcellular location">
    <subcellularLocation>
        <location evidence="5">Plastid</location>
        <location evidence="5">Chloroplast</location>
    </subcellularLocation>
</comment>
<comment type="tissue specificity">
    <text evidence="5">Expressed in roots, leaves, stems and flowers.</text>
</comment>
<comment type="similarity">
    <text evidence="3">Belongs to the phosphofructokinase type A (PFKA) family. PPi-dependent PFK group II subfamily. Atypical ATP-dependent clade 'X' sub-subfamily.</text>
</comment>
<comment type="sequence caution" evidence="6">
    <conflict type="erroneous gene model prediction">
        <sequence resource="EMBL-CDS" id="AAD22353"/>
    </conflict>
</comment>
<keyword id="KW-0021">Allosteric enzyme</keyword>
<keyword id="KW-0067">ATP-binding</keyword>
<keyword id="KW-0150">Chloroplast</keyword>
<keyword id="KW-0324">Glycolysis</keyword>
<keyword id="KW-0418">Kinase</keyword>
<keyword id="KW-0460">Magnesium</keyword>
<keyword id="KW-0479">Metal-binding</keyword>
<keyword id="KW-0547">Nucleotide-binding</keyword>
<keyword id="KW-0597">Phosphoprotein</keyword>
<keyword id="KW-0934">Plastid</keyword>
<keyword id="KW-1185">Reference proteome</keyword>
<keyword id="KW-0808">Transferase</keyword>
<keyword id="KW-0809">Transit peptide</keyword>
<accession>Q8VYN6</accession>
<accession>Q9SJY6</accession>
<sequence>MDALSQAISSGISVPYKNNSSSLVPSHGLTSLILRKSRSPVNPSSRSRVSVRASEIQHSKTSASSIDLSDPDWKLKYEKDFEQRFSIPHITDVLPDAEAIRSTFCLKMRSPTEDFVGGYPSDEEWHGYINNNDRVLLKVISYSSPTSAGAECLDHDCSWVEQWIHRAGPREKIYFRPEEVKAAIITCGGLCPGLNDVIRHIVITLEIYGVKNIVGIPFGYRGFSDKDLTEMPLSRKVVQNIHLSGGSLLGVSRGGPSVSEIVDSMEERGINMLFVLGGNGTHAGANAIHNECRKRKIKVAVVGVPKTIDNDILHMDKTFGFDTAVEEAQRAINSAYIEAHSAYHGIGVVKLMGRNSGFIAMQASLASGQVDICLIPEVPFNLHGPNGVLKHLKYLIETKGSAVICVAEGAGQNFLEKTNAKDASGNAVLGDFGVYIQQETKKYFKEISTPIDVKYIDPTYMIRAVRANASDGILCTVLGQNAVHGAFAGYSGITVGIINTHYAYLPITEVIAYPKSVDPNSRMWHRCLTSTGQPDFI</sequence>
<protein>
    <recommendedName>
        <fullName evidence="3">ATP-dependent 6-phosphofructokinase 5, chloroplastic</fullName>
        <shortName evidence="3">ATP-PFK 5</shortName>
        <shortName evidence="3">Phosphofructokinase 5</shortName>
        <ecNumber evidence="3">2.7.1.11</ecNumber>
    </recommendedName>
    <alternativeName>
        <fullName evidence="3">Phosphohexokinase 5</fullName>
    </alternativeName>
</protein>
<evidence type="ECO:0000250" key="1">
    <source>
        <dbReference type="UniProtKB" id="Q9M0F9"/>
    </source>
</evidence>
<evidence type="ECO:0000255" key="2"/>
<evidence type="ECO:0000255" key="3">
    <source>
        <dbReference type="HAMAP-Rule" id="MF_03186"/>
    </source>
</evidence>
<evidence type="ECO:0000256" key="4">
    <source>
        <dbReference type="SAM" id="MobiDB-lite"/>
    </source>
</evidence>
<evidence type="ECO:0000269" key="5">
    <source>
    </source>
</evidence>
<evidence type="ECO:0000305" key="6"/>
<reference key="1">
    <citation type="journal article" date="1999" name="Nature">
        <title>Sequence and analysis of chromosome 2 of the plant Arabidopsis thaliana.</title>
        <authorList>
            <person name="Lin X."/>
            <person name="Kaul S."/>
            <person name="Rounsley S.D."/>
            <person name="Shea T.P."/>
            <person name="Benito M.-I."/>
            <person name="Town C.D."/>
            <person name="Fujii C.Y."/>
            <person name="Mason T.M."/>
            <person name="Bowman C.L."/>
            <person name="Barnstead M.E."/>
            <person name="Feldblyum T.V."/>
            <person name="Buell C.R."/>
            <person name="Ketchum K.A."/>
            <person name="Lee J.J."/>
            <person name="Ronning C.M."/>
            <person name="Koo H.L."/>
            <person name="Moffat K.S."/>
            <person name="Cronin L.A."/>
            <person name="Shen M."/>
            <person name="Pai G."/>
            <person name="Van Aken S."/>
            <person name="Umayam L."/>
            <person name="Tallon L.J."/>
            <person name="Gill J.E."/>
            <person name="Adams M.D."/>
            <person name="Carrera A.J."/>
            <person name="Creasy T.H."/>
            <person name="Goodman H.M."/>
            <person name="Somerville C.R."/>
            <person name="Copenhaver G.P."/>
            <person name="Preuss D."/>
            <person name="Nierman W.C."/>
            <person name="White O."/>
            <person name="Eisen J.A."/>
            <person name="Salzberg S.L."/>
            <person name="Fraser C.M."/>
            <person name="Venter J.C."/>
        </authorList>
    </citation>
    <scope>NUCLEOTIDE SEQUENCE [LARGE SCALE GENOMIC DNA]</scope>
    <source>
        <strain>cv. Columbia</strain>
    </source>
</reference>
<reference key="2">
    <citation type="journal article" date="2017" name="Plant J.">
        <title>Araport11: a complete reannotation of the Arabidopsis thaliana reference genome.</title>
        <authorList>
            <person name="Cheng C.Y."/>
            <person name="Krishnakumar V."/>
            <person name="Chan A.P."/>
            <person name="Thibaud-Nissen F."/>
            <person name="Schobel S."/>
            <person name="Town C.D."/>
        </authorList>
    </citation>
    <scope>GENOME REANNOTATION</scope>
    <source>
        <strain>cv. Columbia</strain>
    </source>
</reference>
<reference key="3">
    <citation type="journal article" date="2003" name="Science">
        <title>Empirical analysis of transcriptional activity in the Arabidopsis genome.</title>
        <authorList>
            <person name="Yamada K."/>
            <person name="Lim J."/>
            <person name="Dale J.M."/>
            <person name="Chen H."/>
            <person name="Shinn P."/>
            <person name="Palm C.J."/>
            <person name="Southwick A.M."/>
            <person name="Wu H.C."/>
            <person name="Kim C.J."/>
            <person name="Nguyen M."/>
            <person name="Pham P.K."/>
            <person name="Cheuk R.F."/>
            <person name="Karlin-Newmann G."/>
            <person name="Liu S.X."/>
            <person name="Lam B."/>
            <person name="Sakano H."/>
            <person name="Wu T."/>
            <person name="Yu G."/>
            <person name="Miranda M."/>
            <person name="Quach H.L."/>
            <person name="Tripp M."/>
            <person name="Chang C.H."/>
            <person name="Lee J.M."/>
            <person name="Toriumi M.J."/>
            <person name="Chan M.M."/>
            <person name="Tang C.C."/>
            <person name="Onodera C.S."/>
            <person name="Deng J.M."/>
            <person name="Akiyama K."/>
            <person name="Ansari Y."/>
            <person name="Arakawa T."/>
            <person name="Banh J."/>
            <person name="Banno F."/>
            <person name="Bowser L."/>
            <person name="Brooks S.Y."/>
            <person name="Carninci P."/>
            <person name="Chao Q."/>
            <person name="Choy N."/>
            <person name="Enju A."/>
            <person name="Goldsmith A.D."/>
            <person name="Gurjal M."/>
            <person name="Hansen N.F."/>
            <person name="Hayashizaki Y."/>
            <person name="Johnson-Hopson C."/>
            <person name="Hsuan V.W."/>
            <person name="Iida K."/>
            <person name="Karnes M."/>
            <person name="Khan S."/>
            <person name="Koesema E."/>
            <person name="Ishida J."/>
            <person name="Jiang P.X."/>
            <person name="Jones T."/>
            <person name="Kawai J."/>
            <person name="Kamiya A."/>
            <person name="Meyers C."/>
            <person name="Nakajima M."/>
            <person name="Narusaka M."/>
            <person name="Seki M."/>
            <person name="Sakurai T."/>
            <person name="Satou M."/>
            <person name="Tamse R."/>
            <person name="Vaysberg M."/>
            <person name="Wallender E.K."/>
            <person name="Wong C."/>
            <person name="Yamamura Y."/>
            <person name="Yuan S."/>
            <person name="Shinozaki K."/>
            <person name="Davis R.W."/>
            <person name="Theologis A."/>
            <person name="Ecker J.R."/>
        </authorList>
    </citation>
    <scope>NUCLEOTIDE SEQUENCE [LARGE SCALE MRNA]</scope>
    <source>
        <strain>cv. Columbia</strain>
    </source>
</reference>
<reference key="4">
    <citation type="journal article" date="2007" name="FEBS Lett.">
        <title>Characterisation of the ATP-dependent phosphofructokinase gene family from Arabidopsis thaliana.</title>
        <authorList>
            <person name="Mustroph A."/>
            <person name="Sonnewald U."/>
            <person name="Biemelt S."/>
        </authorList>
    </citation>
    <scope>CATALYTIC ACTIVITY</scope>
    <scope>TISSUE SPECIFICITY</scope>
    <scope>SUBCELLULAR LOCATION</scope>
    <scope>GENE FAMILY</scope>
    <scope>NOMENCLATURE</scope>
</reference>
<dbReference type="EC" id="2.7.1.11" evidence="3"/>
<dbReference type="EMBL" id="AC006592">
    <property type="protein sequence ID" value="AAD22353.1"/>
    <property type="status" value="ALT_SEQ"/>
    <property type="molecule type" value="Genomic_DNA"/>
</dbReference>
<dbReference type="EMBL" id="CP002685">
    <property type="protein sequence ID" value="AEC07312.1"/>
    <property type="molecule type" value="Genomic_DNA"/>
</dbReference>
<dbReference type="EMBL" id="AY070402">
    <property type="protein sequence ID" value="AAL49898.1"/>
    <property type="molecule type" value="mRNA"/>
</dbReference>
<dbReference type="EMBL" id="AY096578">
    <property type="protein sequence ID" value="AAM20228.1"/>
    <property type="molecule type" value="mRNA"/>
</dbReference>
<dbReference type="PIR" id="B84613">
    <property type="entry name" value="B84613"/>
</dbReference>
<dbReference type="RefSeq" id="NP_850025.1">
    <property type="nucleotide sequence ID" value="NM_179694.4"/>
</dbReference>
<dbReference type="SMR" id="Q8VYN6"/>
<dbReference type="BioGRID" id="2134">
    <property type="interactions" value="1"/>
</dbReference>
<dbReference type="FunCoup" id="Q8VYN6">
    <property type="interactions" value="1108"/>
</dbReference>
<dbReference type="STRING" id="3702.Q8VYN6"/>
<dbReference type="iPTMnet" id="Q8VYN6"/>
<dbReference type="PaxDb" id="3702-AT2G22480.1"/>
<dbReference type="ProteomicsDB" id="236672"/>
<dbReference type="EnsemblPlants" id="AT2G22480.1">
    <property type="protein sequence ID" value="AT2G22480.1"/>
    <property type="gene ID" value="AT2G22480"/>
</dbReference>
<dbReference type="GeneID" id="816781"/>
<dbReference type="Gramene" id="AT2G22480.1">
    <property type="protein sequence ID" value="AT2G22480.1"/>
    <property type="gene ID" value="AT2G22480"/>
</dbReference>
<dbReference type="KEGG" id="ath:AT2G22480"/>
<dbReference type="Araport" id="AT2G22480"/>
<dbReference type="TAIR" id="AT2G22480">
    <property type="gene designation" value="PFK5"/>
</dbReference>
<dbReference type="eggNOG" id="KOG2440">
    <property type="taxonomic scope" value="Eukaryota"/>
</dbReference>
<dbReference type="HOGENOM" id="CLU_020655_7_1_1"/>
<dbReference type="InParanoid" id="Q8VYN6"/>
<dbReference type="OMA" id="DYCIGFS"/>
<dbReference type="OrthoDB" id="537915at2759"/>
<dbReference type="PhylomeDB" id="Q8VYN6"/>
<dbReference type="BioCyc" id="ARA:AT2G22480-MONOMER"/>
<dbReference type="BRENDA" id="2.7.1.11">
    <property type="organism ID" value="399"/>
</dbReference>
<dbReference type="UniPathway" id="UPA00109">
    <property type="reaction ID" value="UER00182"/>
</dbReference>
<dbReference type="PRO" id="PR:Q8VYN6"/>
<dbReference type="Proteomes" id="UP000006548">
    <property type="component" value="Chromosome 2"/>
</dbReference>
<dbReference type="ExpressionAtlas" id="Q8VYN6">
    <property type="expression patterns" value="baseline and differential"/>
</dbReference>
<dbReference type="GO" id="GO:0009507">
    <property type="term" value="C:chloroplast"/>
    <property type="evidence" value="ECO:0000314"/>
    <property type="project" value="TAIR"/>
</dbReference>
<dbReference type="GO" id="GO:0003872">
    <property type="term" value="F:6-phosphofructokinase activity"/>
    <property type="evidence" value="ECO:0000250"/>
    <property type="project" value="TAIR"/>
</dbReference>
<dbReference type="GO" id="GO:0005524">
    <property type="term" value="F:ATP binding"/>
    <property type="evidence" value="ECO:0007669"/>
    <property type="project" value="UniProtKB-KW"/>
</dbReference>
<dbReference type="GO" id="GO:0046872">
    <property type="term" value="F:metal ion binding"/>
    <property type="evidence" value="ECO:0007669"/>
    <property type="project" value="UniProtKB-KW"/>
</dbReference>
<dbReference type="GO" id="GO:0006002">
    <property type="term" value="P:fructose 6-phosphate metabolic process"/>
    <property type="evidence" value="ECO:0007669"/>
    <property type="project" value="InterPro"/>
</dbReference>
<dbReference type="GO" id="GO:0006096">
    <property type="term" value="P:glycolytic process"/>
    <property type="evidence" value="ECO:0000250"/>
    <property type="project" value="TAIR"/>
</dbReference>
<dbReference type="FunFam" id="3.40.50.450:FF:000002">
    <property type="entry name" value="ATP-dependent 6-phosphofructokinase"/>
    <property type="match status" value="1"/>
</dbReference>
<dbReference type="Gene3D" id="3.40.50.450">
    <property type="match status" value="1"/>
</dbReference>
<dbReference type="HAMAP" id="MF_01981">
    <property type="entry name" value="Phosphofructokinase_II_X"/>
    <property type="match status" value="1"/>
</dbReference>
<dbReference type="InterPro" id="IPR022953">
    <property type="entry name" value="ATP_PFK"/>
</dbReference>
<dbReference type="InterPro" id="IPR050929">
    <property type="entry name" value="PFKA"/>
</dbReference>
<dbReference type="InterPro" id="IPR000023">
    <property type="entry name" value="Phosphofructokinase_dom"/>
</dbReference>
<dbReference type="InterPro" id="IPR035966">
    <property type="entry name" value="PKF_sf"/>
</dbReference>
<dbReference type="InterPro" id="IPR012004">
    <property type="entry name" value="PyroP-dep_PFK_TP0108"/>
</dbReference>
<dbReference type="NCBIfam" id="NF005301">
    <property type="entry name" value="PRK06830.1"/>
    <property type="match status" value="1"/>
</dbReference>
<dbReference type="PANTHER" id="PTHR45770">
    <property type="entry name" value="ATP-DEPENDENT 6-PHOSPHOFRUCTOKINASE 1"/>
    <property type="match status" value="1"/>
</dbReference>
<dbReference type="Pfam" id="PF00365">
    <property type="entry name" value="PFK"/>
    <property type="match status" value="1"/>
</dbReference>
<dbReference type="PRINTS" id="PR00476">
    <property type="entry name" value="PHFRCTKINASE"/>
</dbReference>
<dbReference type="SUPFAM" id="SSF53784">
    <property type="entry name" value="Phosphofructokinase"/>
    <property type="match status" value="1"/>
</dbReference>